<gene>
    <name type="primary">NOPCHAP1</name>
</gene>
<dbReference type="EMBL" id="BC110124">
    <property type="protein sequence ID" value="AAI10125.1"/>
    <property type="molecule type" value="mRNA"/>
</dbReference>
<dbReference type="RefSeq" id="NP_001033778.1">
    <property type="nucleotide sequence ID" value="NM_001038689.2"/>
</dbReference>
<dbReference type="SMR" id="Q2TBJ0"/>
<dbReference type="FunCoup" id="Q2TBJ0">
    <property type="interactions" value="2809"/>
</dbReference>
<dbReference type="STRING" id="9913.ENSBTAP00000028244"/>
<dbReference type="PaxDb" id="9913-ENSBTAP00000028244"/>
<dbReference type="Ensembl" id="ENSBTAT00000028244.4">
    <property type="protein sequence ID" value="ENSBTAP00000028244.3"/>
    <property type="gene ID" value="ENSBTAG00000021196.5"/>
</dbReference>
<dbReference type="GeneID" id="616791"/>
<dbReference type="KEGG" id="bta:616791"/>
<dbReference type="CTD" id="121053"/>
<dbReference type="VEuPathDB" id="HostDB:ENSBTAG00000021196"/>
<dbReference type="VGNC" id="VGNC:49162">
    <property type="gene designation" value="NOPCHAP1"/>
</dbReference>
<dbReference type="eggNOG" id="ENOG502S6C1">
    <property type="taxonomic scope" value="Eukaryota"/>
</dbReference>
<dbReference type="GeneTree" id="ENSGT00390000000376"/>
<dbReference type="HOGENOM" id="CLU_105671_0_0_1"/>
<dbReference type="InParanoid" id="Q2TBJ0"/>
<dbReference type="OMA" id="HEFDIEH"/>
<dbReference type="OrthoDB" id="1112980at2759"/>
<dbReference type="TreeFam" id="TF333191"/>
<dbReference type="Proteomes" id="UP000009136">
    <property type="component" value="Chromosome 5"/>
</dbReference>
<dbReference type="Bgee" id="ENSBTAG00000021196">
    <property type="expression patterns" value="Expressed in oocyte and 108 other cell types or tissues"/>
</dbReference>
<dbReference type="GO" id="GO:0005634">
    <property type="term" value="C:nucleus"/>
    <property type="evidence" value="ECO:0007669"/>
    <property type="project" value="UniProtKB-SubCell"/>
</dbReference>
<dbReference type="GO" id="GO:0062064">
    <property type="term" value="F:box C/D methylation guide snoRNP complex binding"/>
    <property type="evidence" value="ECO:0000250"/>
    <property type="project" value="UniProtKB"/>
</dbReference>
<dbReference type="GO" id="GO:0000492">
    <property type="term" value="P:box C/D snoRNP assembly"/>
    <property type="evidence" value="ECO:0000250"/>
    <property type="project" value="UniProtKB"/>
</dbReference>
<dbReference type="InterPro" id="IPR027921">
    <property type="entry name" value="NOPCHAP1"/>
</dbReference>
<dbReference type="PANTHER" id="PTHR28674:SF1">
    <property type="entry name" value="NOP PROTEIN CHAPERONE 1"/>
    <property type="match status" value="1"/>
</dbReference>
<dbReference type="PANTHER" id="PTHR28674">
    <property type="entry name" value="SIMILAR TO DNA SEGMENT, CHR 10, WAYNE STATE UNIVERSITY 102,-EXPRESSED"/>
    <property type="match status" value="1"/>
</dbReference>
<dbReference type="Pfam" id="PF15370">
    <property type="entry name" value="NOPCHAP1"/>
    <property type="match status" value="1"/>
</dbReference>
<comment type="function">
    <text evidence="1">Client-loading PAQosome/R2TP complex cofactor that selects NOP58 to promote box C/D small nucleolar ribonucleoprotein (snoRNP) assembly. Acts as a bridge between NOP58 and the R2TP complex via RUVBL1:RUVBL2.</text>
</comment>
<comment type="subunit">
    <text evidence="1">Interacts with NOP58, RUVBL1 and RUVBL2; the interactions are direct and NOPCHAP1 bridges the association of NOP58 with RUVBL1:RUVBL2 even in absence of snoRNAs. The interactions with RUVBL1 and RUVBL2 are disrupted upon ATP binding.</text>
</comment>
<comment type="subcellular location">
    <subcellularLocation>
        <location evidence="1">Nucleus</location>
    </subcellularLocation>
</comment>
<feature type="chain" id="PRO_0000263622" description="NOP protein chaperone 1">
    <location>
        <begin position="1"/>
        <end position="192"/>
    </location>
</feature>
<feature type="region of interest" description="Disordered" evidence="2">
    <location>
        <begin position="1"/>
        <end position="39"/>
    </location>
</feature>
<feature type="region of interest" description="Disordered" evidence="2">
    <location>
        <begin position="118"/>
        <end position="192"/>
    </location>
</feature>
<feature type="compositionally biased region" description="Low complexity" evidence="2">
    <location>
        <begin position="1"/>
        <end position="26"/>
    </location>
</feature>
<feature type="compositionally biased region" description="Acidic residues" evidence="2">
    <location>
        <begin position="129"/>
        <end position="152"/>
    </location>
</feature>
<feature type="compositionally biased region" description="Basic and acidic residues" evidence="2">
    <location>
        <begin position="164"/>
        <end position="177"/>
    </location>
</feature>
<feature type="modified residue" description="Phosphoserine" evidence="1">
    <location>
        <position position="34"/>
    </location>
</feature>
<feature type="modified residue" description="Phosphoserine" evidence="1">
    <location>
        <position position="66"/>
    </location>
</feature>
<feature type="modified residue" description="Phosphoserine" evidence="1">
    <location>
        <position position="180"/>
    </location>
</feature>
<evidence type="ECO:0000250" key="1">
    <source>
        <dbReference type="UniProtKB" id="Q8N5I9"/>
    </source>
</evidence>
<evidence type="ECO:0000256" key="2">
    <source>
        <dbReference type="SAM" id="MobiDB-lite"/>
    </source>
</evidence>
<sequence length="192" mass="20946">MEVSGESHSGPSCSSSSRDGSGVSVSKELLMAGSGGRGGIWDRLFINSKPNSRKNSTLQTVRIERSPLLDQVRTFLPQMAQANEKLRKEMAAAPPGHFNIENTDETLGQVIQMDVALFEMNQSHSKEEDSSEENSQDSSEESSESEDEDDSTSSEGEVTIDNIKLPHSEDGKGKIEVLDSPASENKEKQENK</sequence>
<name>NOPC1_BOVIN</name>
<protein>
    <recommendedName>
        <fullName>NOP protein chaperone 1</fullName>
    </recommendedName>
</protein>
<organism>
    <name type="scientific">Bos taurus</name>
    <name type="common">Bovine</name>
    <dbReference type="NCBI Taxonomy" id="9913"/>
    <lineage>
        <taxon>Eukaryota</taxon>
        <taxon>Metazoa</taxon>
        <taxon>Chordata</taxon>
        <taxon>Craniata</taxon>
        <taxon>Vertebrata</taxon>
        <taxon>Euteleostomi</taxon>
        <taxon>Mammalia</taxon>
        <taxon>Eutheria</taxon>
        <taxon>Laurasiatheria</taxon>
        <taxon>Artiodactyla</taxon>
        <taxon>Ruminantia</taxon>
        <taxon>Pecora</taxon>
        <taxon>Bovidae</taxon>
        <taxon>Bovinae</taxon>
        <taxon>Bos</taxon>
    </lineage>
</organism>
<reference key="1">
    <citation type="submission" date="2005-11" db="EMBL/GenBank/DDBJ databases">
        <authorList>
            <consortium name="NIH - Mammalian Gene Collection (MGC) project"/>
        </authorList>
    </citation>
    <scope>NUCLEOTIDE SEQUENCE [LARGE SCALE MRNA]</scope>
    <source>
        <strain>Crossbred X Angus</strain>
        <tissue>Liver</tissue>
    </source>
</reference>
<keyword id="KW-0143">Chaperone</keyword>
<keyword id="KW-0539">Nucleus</keyword>
<keyword id="KW-0597">Phosphoprotein</keyword>
<keyword id="KW-1185">Reference proteome</keyword>
<accession>Q2TBJ0</accession>
<proteinExistence type="evidence at transcript level"/>